<proteinExistence type="inferred from homology"/>
<accession>B2G679</accession>
<organism>
    <name type="scientific">Limosilactobacillus reuteri subsp. reuteri (strain JCM 1112)</name>
    <name type="common">Lactobacillus reuteri</name>
    <dbReference type="NCBI Taxonomy" id="557433"/>
    <lineage>
        <taxon>Bacteria</taxon>
        <taxon>Bacillati</taxon>
        <taxon>Bacillota</taxon>
        <taxon>Bacilli</taxon>
        <taxon>Lactobacillales</taxon>
        <taxon>Lactobacillaceae</taxon>
        <taxon>Limosilactobacillus</taxon>
    </lineage>
</organism>
<dbReference type="EC" id="2.1.2.1" evidence="1"/>
<dbReference type="EMBL" id="AP007281">
    <property type="protein sequence ID" value="BAG24961.1"/>
    <property type="molecule type" value="Genomic_DNA"/>
</dbReference>
<dbReference type="RefSeq" id="WP_003667552.1">
    <property type="nucleotide sequence ID" value="NC_010609.1"/>
</dbReference>
<dbReference type="SMR" id="B2G679"/>
<dbReference type="KEGG" id="lrf:LAR_0445"/>
<dbReference type="HOGENOM" id="CLU_022477_2_1_9"/>
<dbReference type="UniPathway" id="UPA00193"/>
<dbReference type="UniPathway" id="UPA00288">
    <property type="reaction ID" value="UER01023"/>
</dbReference>
<dbReference type="GO" id="GO:0005829">
    <property type="term" value="C:cytosol"/>
    <property type="evidence" value="ECO:0007669"/>
    <property type="project" value="TreeGrafter"/>
</dbReference>
<dbReference type="GO" id="GO:0004372">
    <property type="term" value="F:glycine hydroxymethyltransferase activity"/>
    <property type="evidence" value="ECO:0007669"/>
    <property type="project" value="UniProtKB-UniRule"/>
</dbReference>
<dbReference type="GO" id="GO:0030170">
    <property type="term" value="F:pyridoxal phosphate binding"/>
    <property type="evidence" value="ECO:0007669"/>
    <property type="project" value="UniProtKB-UniRule"/>
</dbReference>
<dbReference type="GO" id="GO:0019264">
    <property type="term" value="P:glycine biosynthetic process from serine"/>
    <property type="evidence" value="ECO:0007669"/>
    <property type="project" value="UniProtKB-UniRule"/>
</dbReference>
<dbReference type="GO" id="GO:0035999">
    <property type="term" value="P:tetrahydrofolate interconversion"/>
    <property type="evidence" value="ECO:0007669"/>
    <property type="project" value="UniProtKB-UniRule"/>
</dbReference>
<dbReference type="CDD" id="cd00378">
    <property type="entry name" value="SHMT"/>
    <property type="match status" value="1"/>
</dbReference>
<dbReference type="FunFam" id="3.40.640.10:FF:000001">
    <property type="entry name" value="Serine hydroxymethyltransferase"/>
    <property type="match status" value="1"/>
</dbReference>
<dbReference type="Gene3D" id="3.90.1150.10">
    <property type="entry name" value="Aspartate Aminotransferase, domain 1"/>
    <property type="match status" value="1"/>
</dbReference>
<dbReference type="Gene3D" id="3.40.640.10">
    <property type="entry name" value="Type I PLP-dependent aspartate aminotransferase-like (Major domain)"/>
    <property type="match status" value="1"/>
</dbReference>
<dbReference type="HAMAP" id="MF_00051">
    <property type="entry name" value="SHMT"/>
    <property type="match status" value="1"/>
</dbReference>
<dbReference type="InterPro" id="IPR015424">
    <property type="entry name" value="PyrdxlP-dep_Trfase"/>
</dbReference>
<dbReference type="InterPro" id="IPR015421">
    <property type="entry name" value="PyrdxlP-dep_Trfase_major"/>
</dbReference>
<dbReference type="InterPro" id="IPR015422">
    <property type="entry name" value="PyrdxlP-dep_Trfase_small"/>
</dbReference>
<dbReference type="InterPro" id="IPR001085">
    <property type="entry name" value="Ser_HO-MeTrfase"/>
</dbReference>
<dbReference type="InterPro" id="IPR049943">
    <property type="entry name" value="Ser_HO-MeTrfase-like"/>
</dbReference>
<dbReference type="InterPro" id="IPR019798">
    <property type="entry name" value="Ser_HO-MeTrfase_PLP_BS"/>
</dbReference>
<dbReference type="InterPro" id="IPR039429">
    <property type="entry name" value="SHMT-like_dom"/>
</dbReference>
<dbReference type="NCBIfam" id="NF000586">
    <property type="entry name" value="PRK00011.1"/>
    <property type="match status" value="1"/>
</dbReference>
<dbReference type="PANTHER" id="PTHR11680">
    <property type="entry name" value="SERINE HYDROXYMETHYLTRANSFERASE"/>
    <property type="match status" value="1"/>
</dbReference>
<dbReference type="PANTHER" id="PTHR11680:SF35">
    <property type="entry name" value="SERINE HYDROXYMETHYLTRANSFERASE 1"/>
    <property type="match status" value="1"/>
</dbReference>
<dbReference type="Pfam" id="PF00464">
    <property type="entry name" value="SHMT"/>
    <property type="match status" value="1"/>
</dbReference>
<dbReference type="PIRSF" id="PIRSF000412">
    <property type="entry name" value="SHMT"/>
    <property type="match status" value="1"/>
</dbReference>
<dbReference type="SUPFAM" id="SSF53383">
    <property type="entry name" value="PLP-dependent transferases"/>
    <property type="match status" value="1"/>
</dbReference>
<dbReference type="PROSITE" id="PS00096">
    <property type="entry name" value="SHMT"/>
    <property type="match status" value="1"/>
</dbReference>
<keyword id="KW-0028">Amino-acid biosynthesis</keyword>
<keyword id="KW-0963">Cytoplasm</keyword>
<keyword id="KW-0554">One-carbon metabolism</keyword>
<keyword id="KW-0663">Pyridoxal phosphate</keyword>
<keyword id="KW-0808">Transferase</keyword>
<gene>
    <name evidence="1" type="primary">glyA</name>
    <name type="ordered locus">LAR_0445</name>
</gene>
<sequence length="411" mass="44951">MNYGKKSPQLWAAIENEEQRQQDTIELIASENIVSDAVREAQGSVLTNKYAEGYPNKRYYGGCEFIDQVEQLAIDYAKKLFNAAYVNVQPHSGSQANMAVYQALLKPGDVILGMGMDAGGHLTHGATVNFSGKLYKTYGYGLNPDTEELDYDEIMALAKKVKPQLIVAGASAYSRIIDWQAFRKIADEVGAYLMVDMAHIAGLVATGTHPSPLPIADVVTTTTHKTLRGPRGGMILSKSTELGRKINSAVFPGIQGGPLEHVIAGKAQAFYEDLQPEYAEYIQQVVKNAQAMEKVFNTSKQIRVVSGKTENHLLVLDLTKTGLTGKDAQNLLDRVHITTNKEAIPNDPRSPFITSGLRIGTPAITSRGFKEEDAQKVAELISTALTNPTDEERLQEVAKGVHELTTKYPLN</sequence>
<comment type="function">
    <text evidence="1">Catalyzes the reversible interconversion of serine and glycine with tetrahydrofolate (THF) serving as the one-carbon carrier. This reaction serves as the major source of one-carbon groups required for the biosynthesis of purines, thymidylate, methionine, and other important biomolecules. Also exhibits THF-independent aldolase activity toward beta-hydroxyamino acids, producing glycine and aldehydes, via a retro-aldol mechanism.</text>
</comment>
<comment type="catalytic activity">
    <reaction evidence="1">
        <text>(6R)-5,10-methylene-5,6,7,8-tetrahydrofolate + glycine + H2O = (6S)-5,6,7,8-tetrahydrofolate + L-serine</text>
        <dbReference type="Rhea" id="RHEA:15481"/>
        <dbReference type="ChEBI" id="CHEBI:15377"/>
        <dbReference type="ChEBI" id="CHEBI:15636"/>
        <dbReference type="ChEBI" id="CHEBI:33384"/>
        <dbReference type="ChEBI" id="CHEBI:57305"/>
        <dbReference type="ChEBI" id="CHEBI:57453"/>
        <dbReference type="EC" id="2.1.2.1"/>
    </reaction>
</comment>
<comment type="cofactor">
    <cofactor evidence="1">
        <name>pyridoxal 5'-phosphate</name>
        <dbReference type="ChEBI" id="CHEBI:597326"/>
    </cofactor>
</comment>
<comment type="pathway">
    <text evidence="1">One-carbon metabolism; tetrahydrofolate interconversion.</text>
</comment>
<comment type="pathway">
    <text evidence="1">Amino-acid biosynthesis; glycine biosynthesis; glycine from L-serine: step 1/1.</text>
</comment>
<comment type="subunit">
    <text evidence="1">Homodimer.</text>
</comment>
<comment type="subcellular location">
    <subcellularLocation>
        <location evidence="1">Cytoplasm</location>
    </subcellularLocation>
</comment>
<comment type="similarity">
    <text evidence="1">Belongs to the SHMT family.</text>
</comment>
<evidence type="ECO:0000255" key="1">
    <source>
        <dbReference type="HAMAP-Rule" id="MF_00051"/>
    </source>
</evidence>
<name>GLYA_LIMRJ</name>
<protein>
    <recommendedName>
        <fullName evidence="1">Serine hydroxymethyltransferase</fullName>
        <shortName evidence="1">SHMT</shortName>
        <shortName evidence="1">Serine methylase</shortName>
        <ecNumber evidence="1">2.1.2.1</ecNumber>
    </recommendedName>
</protein>
<reference key="1">
    <citation type="journal article" date="2008" name="DNA Res.">
        <title>Comparative genome analysis of Lactobacillus reuteri and Lactobacillus fermentum reveal a genomic island for reuterin and cobalamin production.</title>
        <authorList>
            <person name="Morita H."/>
            <person name="Toh H."/>
            <person name="Fukuda S."/>
            <person name="Horikawa H."/>
            <person name="Oshima K."/>
            <person name="Suzuki T."/>
            <person name="Murakami M."/>
            <person name="Hisamatsu S."/>
            <person name="Kato Y."/>
            <person name="Takizawa T."/>
            <person name="Fukuoka H."/>
            <person name="Yoshimura T."/>
            <person name="Itoh K."/>
            <person name="O'Sullivan D.J."/>
            <person name="McKay L.L."/>
            <person name="Ohno H."/>
            <person name="Kikuchi J."/>
            <person name="Masaoka T."/>
            <person name="Hattori M."/>
        </authorList>
    </citation>
    <scope>NUCLEOTIDE SEQUENCE [LARGE SCALE GENOMIC DNA]</scope>
    <source>
        <strain>JCM 1112</strain>
    </source>
</reference>
<feature type="chain" id="PRO_1000091552" description="Serine hydroxymethyltransferase">
    <location>
        <begin position="1"/>
        <end position="411"/>
    </location>
</feature>
<feature type="binding site" evidence="1">
    <location>
        <begin position="120"/>
        <end position="122"/>
    </location>
    <ligand>
        <name>(6S)-5,6,7,8-tetrahydrofolate</name>
        <dbReference type="ChEBI" id="CHEBI:57453"/>
    </ligand>
</feature>
<feature type="binding site" evidence="1">
    <location>
        <begin position="350"/>
        <end position="352"/>
    </location>
    <ligand>
        <name>(6S)-5,6,7,8-tetrahydrofolate</name>
        <dbReference type="ChEBI" id="CHEBI:57453"/>
    </ligand>
</feature>
<feature type="site" description="Plays an important role in substrate specificity" evidence="1">
    <location>
        <position position="224"/>
    </location>
</feature>
<feature type="modified residue" description="N6-(pyridoxal phosphate)lysine" evidence="1">
    <location>
        <position position="225"/>
    </location>
</feature>